<comment type="catalytic activity">
    <reaction>
        <text>a 2-oxocarboxylate + L-ornithine = L-glutamate 5-semialdehyde + an L-alpha-amino acid</text>
        <dbReference type="Rhea" id="RHEA:13877"/>
        <dbReference type="ChEBI" id="CHEBI:35179"/>
        <dbReference type="ChEBI" id="CHEBI:46911"/>
        <dbReference type="ChEBI" id="CHEBI:58066"/>
        <dbReference type="ChEBI" id="CHEBI:59869"/>
        <dbReference type="EC" id="2.6.1.13"/>
    </reaction>
</comment>
<comment type="cofactor">
    <cofactor>
        <name>pyridoxal 5'-phosphate</name>
        <dbReference type="ChEBI" id="CHEBI:597326"/>
    </cofactor>
</comment>
<comment type="pathway">
    <text>Amino-acid biosynthesis; L-proline biosynthesis; L-glutamate 5-semialdehyde from L-ornithine: step 1/1.</text>
</comment>
<comment type="subunit">
    <text evidence="1">Homotetramer.</text>
</comment>
<comment type="subcellular location">
    <subcellularLocation>
        <location>Mitochondrion matrix</location>
    </subcellularLocation>
</comment>
<comment type="similarity">
    <text evidence="3">Belongs to the class-III pyridoxal-phosphate-dependent aminotransferase family.</text>
</comment>
<evidence type="ECO:0000250" key="1"/>
<evidence type="ECO:0000255" key="2"/>
<evidence type="ECO:0000305" key="3"/>
<keyword id="KW-0032">Aminotransferase</keyword>
<keyword id="KW-0496">Mitochondrion</keyword>
<keyword id="KW-0663">Pyridoxal phosphate</keyword>
<keyword id="KW-0808">Transferase</keyword>
<keyword id="KW-0809">Transit peptide</keyword>
<name>OAT_DROAN</name>
<feature type="transit peptide" description="Mitochondrion" evidence="2">
    <location>
        <begin position="1"/>
        <end status="unknown"/>
    </location>
</feature>
<feature type="chain" id="PRO_0000001267" description="Ornithine aminotransferase, mitochondrial">
    <location>
        <begin status="unknown"/>
        <end position="432"/>
    </location>
</feature>
<feature type="modified residue" description="N6-(pyridoxal phosphate)lysine" evidence="1">
    <location>
        <position position="287"/>
    </location>
</feature>
<dbReference type="EC" id="2.6.1.13"/>
<dbReference type="EMBL" id="D50331">
    <property type="protein sequence ID" value="BAA08868.1"/>
    <property type="molecule type" value="mRNA"/>
</dbReference>
<dbReference type="SMR" id="P49724"/>
<dbReference type="eggNOG" id="KOG1402">
    <property type="taxonomic scope" value="Eukaryota"/>
</dbReference>
<dbReference type="OrthoDB" id="425114at2759"/>
<dbReference type="UniPathway" id="UPA00098">
    <property type="reaction ID" value="UER00358"/>
</dbReference>
<dbReference type="GO" id="GO:0005759">
    <property type="term" value="C:mitochondrial matrix"/>
    <property type="evidence" value="ECO:0007669"/>
    <property type="project" value="UniProtKB-SubCell"/>
</dbReference>
<dbReference type="GO" id="GO:0042802">
    <property type="term" value="F:identical protein binding"/>
    <property type="evidence" value="ECO:0007669"/>
    <property type="project" value="TreeGrafter"/>
</dbReference>
<dbReference type="GO" id="GO:0004587">
    <property type="term" value="F:ornithine aminotransferase activity"/>
    <property type="evidence" value="ECO:0007669"/>
    <property type="project" value="UniProtKB-EC"/>
</dbReference>
<dbReference type="GO" id="GO:0030170">
    <property type="term" value="F:pyridoxal phosphate binding"/>
    <property type="evidence" value="ECO:0007669"/>
    <property type="project" value="InterPro"/>
</dbReference>
<dbReference type="GO" id="GO:0019544">
    <property type="term" value="P:arginine catabolic process to glutamate"/>
    <property type="evidence" value="ECO:0007669"/>
    <property type="project" value="TreeGrafter"/>
</dbReference>
<dbReference type="GO" id="GO:0010121">
    <property type="term" value="P:arginine catabolic process to proline via ornithine"/>
    <property type="evidence" value="ECO:0007669"/>
    <property type="project" value="TreeGrafter"/>
</dbReference>
<dbReference type="GO" id="GO:0055129">
    <property type="term" value="P:L-proline biosynthetic process"/>
    <property type="evidence" value="ECO:0007669"/>
    <property type="project" value="UniProtKB-UniPathway"/>
</dbReference>
<dbReference type="CDD" id="cd00610">
    <property type="entry name" value="OAT_like"/>
    <property type="match status" value="1"/>
</dbReference>
<dbReference type="FunFam" id="3.40.640.10:FF:000011">
    <property type="entry name" value="Ornithine aminotransferase"/>
    <property type="match status" value="1"/>
</dbReference>
<dbReference type="FunFam" id="3.90.1150.10:FF:000152">
    <property type="entry name" value="Ornithine aminotransferase"/>
    <property type="match status" value="2"/>
</dbReference>
<dbReference type="Gene3D" id="3.90.1150.10">
    <property type="entry name" value="Aspartate Aminotransferase, domain 1"/>
    <property type="match status" value="1"/>
</dbReference>
<dbReference type="Gene3D" id="3.40.640.10">
    <property type="entry name" value="Type I PLP-dependent aspartate aminotransferase-like (Major domain)"/>
    <property type="match status" value="1"/>
</dbReference>
<dbReference type="InterPro" id="IPR005814">
    <property type="entry name" value="Aminotrans_3"/>
</dbReference>
<dbReference type="InterPro" id="IPR049704">
    <property type="entry name" value="Aminotrans_3_PPA_site"/>
</dbReference>
<dbReference type="InterPro" id="IPR050103">
    <property type="entry name" value="Class-III_PLP-dep_AT"/>
</dbReference>
<dbReference type="InterPro" id="IPR010164">
    <property type="entry name" value="Orn_aminotrans"/>
</dbReference>
<dbReference type="InterPro" id="IPR015424">
    <property type="entry name" value="PyrdxlP-dep_Trfase"/>
</dbReference>
<dbReference type="InterPro" id="IPR015421">
    <property type="entry name" value="PyrdxlP-dep_Trfase_major"/>
</dbReference>
<dbReference type="InterPro" id="IPR015422">
    <property type="entry name" value="PyrdxlP-dep_Trfase_small"/>
</dbReference>
<dbReference type="NCBIfam" id="TIGR01885">
    <property type="entry name" value="Orn_aminotrans"/>
    <property type="match status" value="1"/>
</dbReference>
<dbReference type="PANTHER" id="PTHR11986">
    <property type="entry name" value="AMINOTRANSFERASE CLASS III"/>
    <property type="match status" value="1"/>
</dbReference>
<dbReference type="PANTHER" id="PTHR11986:SF18">
    <property type="entry name" value="ORNITHINE AMINOTRANSFERASE, MITOCHONDRIAL"/>
    <property type="match status" value="1"/>
</dbReference>
<dbReference type="Pfam" id="PF00202">
    <property type="entry name" value="Aminotran_3"/>
    <property type="match status" value="1"/>
</dbReference>
<dbReference type="PIRSF" id="PIRSF000521">
    <property type="entry name" value="Transaminase_4ab_Lys_Orn"/>
    <property type="match status" value="1"/>
</dbReference>
<dbReference type="SUPFAM" id="SSF53383">
    <property type="entry name" value="PLP-dependent transferases"/>
    <property type="match status" value="1"/>
</dbReference>
<dbReference type="PROSITE" id="PS00600">
    <property type="entry name" value="AA_TRANSFER_CLASS_3"/>
    <property type="match status" value="1"/>
</dbReference>
<protein>
    <recommendedName>
        <fullName>Ornithine aminotransferase, mitochondrial</fullName>
        <ecNumber>2.6.1.13</ecNumber>
    </recommendedName>
    <alternativeName>
        <fullName>Ornithine--oxo-acid aminotransferase</fullName>
    </alternativeName>
</protein>
<accession>P49724</accession>
<reference key="1">
    <citation type="journal article" date="1997" name="Genes Genet. Syst.">
        <title>Molecular cloning and characterization of Drosophila ornithine aminotransferase gene.</title>
        <authorList>
            <person name="Yoshida K.M."/>
            <person name="Hori S.H."/>
        </authorList>
    </citation>
    <scope>NUCLEOTIDE SEQUENCE [MRNA]</scope>
    <scope>CHARACTERIZATION</scope>
</reference>
<sequence>MFSKLSTRGIATRIGYLAQKAASQETAAPAAGSLSETVFARENKYGAHNYHPLPVALSKGEGVFVWDVEGKRYFDYLSAYSAVNQGHCHPKIVKALTEQASKLALTSRAFYSDVLGEYEEYVTKLFGFDKVLPMNTGVEGGETACKLARKWGYLQKKIPENQAKIIFARNNFWGRTLSAVSASNDPSSYEGFGPFMPGFELIEYDNVTALEEALKDPNVCAFMVEPIQGERGVVVPSDGYLKKVRELCSKNNVLWIADEVQTGLARTGKLLAVNYEDVQPDILILGKALSGGLYPVSAVLCNDPVMLCIKPGEHGSTYGGNPLGCRVAMAALEVLQEEKLAENAFKMGELLRSELSTLPKDVVSVVRGKGLLNAIVINEKYDAWKVCLKLKENGLLAKPTHGDIIRFAPPLVIMNPRLRESIEIIKKTILSM</sequence>
<proteinExistence type="evidence at protein level"/>
<gene>
    <name type="primary">Oat</name>
</gene>
<organism>
    <name type="scientific">Drosophila ananassae</name>
    <name type="common">Fruit fly</name>
    <dbReference type="NCBI Taxonomy" id="7217"/>
    <lineage>
        <taxon>Eukaryota</taxon>
        <taxon>Metazoa</taxon>
        <taxon>Ecdysozoa</taxon>
        <taxon>Arthropoda</taxon>
        <taxon>Hexapoda</taxon>
        <taxon>Insecta</taxon>
        <taxon>Pterygota</taxon>
        <taxon>Neoptera</taxon>
        <taxon>Endopterygota</taxon>
        <taxon>Diptera</taxon>
        <taxon>Brachycera</taxon>
        <taxon>Muscomorpha</taxon>
        <taxon>Ephydroidea</taxon>
        <taxon>Drosophilidae</taxon>
        <taxon>Drosophila</taxon>
        <taxon>Sophophora</taxon>
    </lineage>
</organism>